<sequence length="441" mass="48818">MQQAAAPKISFVSLGCPKALVDSERIITRLRAEGYELARQHDGADLVIVNTCGFLDSAKQESLAAIGEAMAANGKVIVTGCMGAEPEQIEAAYPGVLSITGPQQYESVLEAVHRAKPALHNPHLDLVPEQGIRLTPRHYAYLKISEGCNNRCSFCIIPKLRGDLVSRSADDVLREAEKLVAAGVKELLVISQDTSAYGVDLKYAESPWKDRTVRAKFIDLARELGELGAWVRLHYVYPYPHVDEVIGLMAEGKVLPYLDIPFQHASPDVLKLMKRPAAQDKTLDRIKRWRADCPDLALRSTFIVGFPGETERDFEFLLDWLDEAEIDRLGAFKYEPVAGAPSNALPDQISAEVKQERWNRLMARQQVISARRLKRKVGTRQQIIIDEVGPTVAKGRSKADAPEIDGSVYLSSRRPLRVGEIVTAKIDRADAYDLHGTVAGF</sequence>
<gene>
    <name evidence="1" type="primary">rimO</name>
    <name type="ordered locus">RPD_2633</name>
</gene>
<feature type="chain" id="PRO_0000374973" description="Ribosomal protein uS12 methylthiotransferase RimO">
    <location>
        <begin position="1"/>
        <end position="441"/>
    </location>
</feature>
<feature type="domain" description="MTTase N-terminal" evidence="1">
    <location>
        <begin position="7"/>
        <end position="117"/>
    </location>
</feature>
<feature type="domain" description="Radical SAM core" evidence="2">
    <location>
        <begin position="134"/>
        <end position="371"/>
    </location>
</feature>
<feature type="domain" description="TRAM" evidence="1">
    <location>
        <begin position="374"/>
        <end position="440"/>
    </location>
</feature>
<feature type="binding site" evidence="1">
    <location>
        <position position="16"/>
    </location>
    <ligand>
        <name>[4Fe-4S] cluster</name>
        <dbReference type="ChEBI" id="CHEBI:49883"/>
        <label>1</label>
    </ligand>
</feature>
<feature type="binding site" evidence="1">
    <location>
        <position position="52"/>
    </location>
    <ligand>
        <name>[4Fe-4S] cluster</name>
        <dbReference type="ChEBI" id="CHEBI:49883"/>
        <label>1</label>
    </ligand>
</feature>
<feature type="binding site" evidence="1">
    <location>
        <position position="81"/>
    </location>
    <ligand>
        <name>[4Fe-4S] cluster</name>
        <dbReference type="ChEBI" id="CHEBI:49883"/>
        <label>1</label>
    </ligand>
</feature>
<feature type="binding site" evidence="1">
    <location>
        <position position="148"/>
    </location>
    <ligand>
        <name>[4Fe-4S] cluster</name>
        <dbReference type="ChEBI" id="CHEBI:49883"/>
        <label>2</label>
        <note>4Fe-4S-S-AdoMet</note>
    </ligand>
</feature>
<feature type="binding site" evidence="1">
    <location>
        <position position="152"/>
    </location>
    <ligand>
        <name>[4Fe-4S] cluster</name>
        <dbReference type="ChEBI" id="CHEBI:49883"/>
        <label>2</label>
        <note>4Fe-4S-S-AdoMet</note>
    </ligand>
</feature>
<feature type="binding site" evidence="1">
    <location>
        <position position="155"/>
    </location>
    <ligand>
        <name>[4Fe-4S] cluster</name>
        <dbReference type="ChEBI" id="CHEBI:49883"/>
        <label>2</label>
        <note>4Fe-4S-S-AdoMet</note>
    </ligand>
</feature>
<dbReference type="EC" id="2.8.4.4" evidence="1"/>
<dbReference type="EMBL" id="CP000283">
    <property type="protein sequence ID" value="ABE39862.1"/>
    <property type="molecule type" value="Genomic_DNA"/>
</dbReference>
<dbReference type="SMR" id="Q136X7"/>
<dbReference type="STRING" id="316057.RPD_2633"/>
<dbReference type="KEGG" id="rpd:RPD_2633"/>
<dbReference type="eggNOG" id="COG0621">
    <property type="taxonomic scope" value="Bacteria"/>
</dbReference>
<dbReference type="HOGENOM" id="CLU_018697_0_0_5"/>
<dbReference type="BioCyc" id="RPAL316057:RPD_RS13245-MONOMER"/>
<dbReference type="Proteomes" id="UP000001818">
    <property type="component" value="Chromosome"/>
</dbReference>
<dbReference type="GO" id="GO:0005829">
    <property type="term" value="C:cytosol"/>
    <property type="evidence" value="ECO:0007669"/>
    <property type="project" value="TreeGrafter"/>
</dbReference>
<dbReference type="GO" id="GO:0051539">
    <property type="term" value="F:4 iron, 4 sulfur cluster binding"/>
    <property type="evidence" value="ECO:0007669"/>
    <property type="project" value="UniProtKB-UniRule"/>
</dbReference>
<dbReference type="GO" id="GO:0035599">
    <property type="term" value="F:aspartic acid methylthiotransferase activity"/>
    <property type="evidence" value="ECO:0007669"/>
    <property type="project" value="TreeGrafter"/>
</dbReference>
<dbReference type="GO" id="GO:0046872">
    <property type="term" value="F:metal ion binding"/>
    <property type="evidence" value="ECO:0007669"/>
    <property type="project" value="UniProtKB-KW"/>
</dbReference>
<dbReference type="GO" id="GO:0103039">
    <property type="term" value="F:protein methylthiotransferase activity"/>
    <property type="evidence" value="ECO:0007669"/>
    <property type="project" value="UniProtKB-EC"/>
</dbReference>
<dbReference type="GO" id="GO:0006400">
    <property type="term" value="P:tRNA modification"/>
    <property type="evidence" value="ECO:0007669"/>
    <property type="project" value="InterPro"/>
</dbReference>
<dbReference type="CDD" id="cd01335">
    <property type="entry name" value="Radical_SAM"/>
    <property type="match status" value="1"/>
</dbReference>
<dbReference type="FunFam" id="2.40.50.140:FF:000060">
    <property type="entry name" value="Ribosomal protein S12 methylthiotransferase RimO"/>
    <property type="match status" value="1"/>
</dbReference>
<dbReference type="FunFam" id="3.40.50.12160:FF:000002">
    <property type="entry name" value="Ribosomal protein S12 methylthiotransferase RimO"/>
    <property type="match status" value="1"/>
</dbReference>
<dbReference type="FunFam" id="3.80.30.20:FF:000001">
    <property type="entry name" value="tRNA-2-methylthio-N(6)-dimethylallyladenosine synthase 2"/>
    <property type="match status" value="1"/>
</dbReference>
<dbReference type="Gene3D" id="3.40.50.12160">
    <property type="entry name" value="Methylthiotransferase, N-terminal domain"/>
    <property type="match status" value="1"/>
</dbReference>
<dbReference type="Gene3D" id="2.40.50.140">
    <property type="entry name" value="Nucleic acid-binding proteins"/>
    <property type="match status" value="1"/>
</dbReference>
<dbReference type="Gene3D" id="3.80.30.20">
    <property type="entry name" value="tm_1862 like domain"/>
    <property type="match status" value="1"/>
</dbReference>
<dbReference type="HAMAP" id="MF_01865">
    <property type="entry name" value="MTTase_RimO"/>
    <property type="match status" value="1"/>
</dbReference>
<dbReference type="InterPro" id="IPR006638">
    <property type="entry name" value="Elp3/MiaA/NifB-like_rSAM"/>
</dbReference>
<dbReference type="InterPro" id="IPR005839">
    <property type="entry name" value="Methylthiotransferase"/>
</dbReference>
<dbReference type="InterPro" id="IPR020612">
    <property type="entry name" value="Methylthiotransferase_CS"/>
</dbReference>
<dbReference type="InterPro" id="IPR013848">
    <property type="entry name" value="Methylthiotransferase_N"/>
</dbReference>
<dbReference type="InterPro" id="IPR038135">
    <property type="entry name" value="Methylthiotransferase_N_sf"/>
</dbReference>
<dbReference type="InterPro" id="IPR012340">
    <property type="entry name" value="NA-bd_OB-fold"/>
</dbReference>
<dbReference type="InterPro" id="IPR005840">
    <property type="entry name" value="Ribosomal_uS12_MeSTrfase_RimO"/>
</dbReference>
<dbReference type="InterPro" id="IPR007197">
    <property type="entry name" value="rSAM"/>
</dbReference>
<dbReference type="InterPro" id="IPR023404">
    <property type="entry name" value="rSAM_horseshoe"/>
</dbReference>
<dbReference type="InterPro" id="IPR002792">
    <property type="entry name" value="TRAM_dom"/>
</dbReference>
<dbReference type="NCBIfam" id="TIGR01125">
    <property type="entry name" value="30S ribosomal protein S12 methylthiotransferase RimO"/>
    <property type="match status" value="1"/>
</dbReference>
<dbReference type="NCBIfam" id="TIGR00089">
    <property type="entry name" value="MiaB/RimO family radical SAM methylthiotransferase"/>
    <property type="match status" value="1"/>
</dbReference>
<dbReference type="PANTHER" id="PTHR43837">
    <property type="entry name" value="RIBOSOMAL PROTEIN S12 METHYLTHIOTRANSFERASE RIMO"/>
    <property type="match status" value="1"/>
</dbReference>
<dbReference type="PANTHER" id="PTHR43837:SF1">
    <property type="entry name" value="RIBOSOMAL PROTEIN US12 METHYLTHIOTRANSFERASE RIMO"/>
    <property type="match status" value="1"/>
</dbReference>
<dbReference type="Pfam" id="PF04055">
    <property type="entry name" value="Radical_SAM"/>
    <property type="match status" value="1"/>
</dbReference>
<dbReference type="Pfam" id="PF18693">
    <property type="entry name" value="TRAM_2"/>
    <property type="match status" value="1"/>
</dbReference>
<dbReference type="Pfam" id="PF00919">
    <property type="entry name" value="UPF0004"/>
    <property type="match status" value="1"/>
</dbReference>
<dbReference type="SFLD" id="SFLDG01082">
    <property type="entry name" value="B12-binding_domain_containing"/>
    <property type="match status" value="1"/>
</dbReference>
<dbReference type="SFLD" id="SFLDG01061">
    <property type="entry name" value="methylthiotransferase"/>
    <property type="match status" value="1"/>
</dbReference>
<dbReference type="SFLD" id="SFLDF00274">
    <property type="entry name" value="ribosomal_protein_S12_methylth"/>
    <property type="match status" value="1"/>
</dbReference>
<dbReference type="SMART" id="SM00729">
    <property type="entry name" value="Elp3"/>
    <property type="match status" value="1"/>
</dbReference>
<dbReference type="SUPFAM" id="SSF102114">
    <property type="entry name" value="Radical SAM enzymes"/>
    <property type="match status" value="1"/>
</dbReference>
<dbReference type="PROSITE" id="PS51449">
    <property type="entry name" value="MTTASE_N"/>
    <property type="match status" value="1"/>
</dbReference>
<dbReference type="PROSITE" id="PS01278">
    <property type="entry name" value="MTTASE_RADICAL"/>
    <property type="match status" value="1"/>
</dbReference>
<dbReference type="PROSITE" id="PS51918">
    <property type="entry name" value="RADICAL_SAM"/>
    <property type="match status" value="1"/>
</dbReference>
<dbReference type="PROSITE" id="PS50926">
    <property type="entry name" value="TRAM"/>
    <property type="match status" value="1"/>
</dbReference>
<proteinExistence type="inferred from homology"/>
<evidence type="ECO:0000255" key="1">
    <source>
        <dbReference type="HAMAP-Rule" id="MF_01865"/>
    </source>
</evidence>
<evidence type="ECO:0000255" key="2">
    <source>
        <dbReference type="PROSITE-ProRule" id="PRU01266"/>
    </source>
</evidence>
<protein>
    <recommendedName>
        <fullName evidence="1">Ribosomal protein uS12 methylthiotransferase RimO</fullName>
        <shortName evidence="1">uS12 MTTase</shortName>
        <shortName evidence="1">uS12 methylthiotransferase</shortName>
        <ecNumber evidence="1">2.8.4.4</ecNumber>
    </recommendedName>
    <alternativeName>
        <fullName evidence="1">Ribosomal protein uS12 (aspartate-C(3))-methylthiotransferase</fullName>
    </alternativeName>
    <alternativeName>
        <fullName evidence="1">Ribosome maturation factor RimO</fullName>
    </alternativeName>
</protein>
<comment type="function">
    <text evidence="1">Catalyzes the methylthiolation of an aspartic acid residue of ribosomal protein uS12.</text>
</comment>
<comment type="catalytic activity">
    <reaction evidence="1">
        <text>L-aspartate(89)-[ribosomal protein uS12]-hydrogen + (sulfur carrier)-SH + AH2 + 2 S-adenosyl-L-methionine = 3-methylsulfanyl-L-aspartate(89)-[ribosomal protein uS12]-hydrogen + (sulfur carrier)-H + 5'-deoxyadenosine + L-methionine + A + S-adenosyl-L-homocysteine + 2 H(+)</text>
        <dbReference type="Rhea" id="RHEA:37087"/>
        <dbReference type="Rhea" id="RHEA-COMP:10460"/>
        <dbReference type="Rhea" id="RHEA-COMP:10461"/>
        <dbReference type="Rhea" id="RHEA-COMP:14737"/>
        <dbReference type="Rhea" id="RHEA-COMP:14739"/>
        <dbReference type="ChEBI" id="CHEBI:13193"/>
        <dbReference type="ChEBI" id="CHEBI:15378"/>
        <dbReference type="ChEBI" id="CHEBI:17319"/>
        <dbReference type="ChEBI" id="CHEBI:17499"/>
        <dbReference type="ChEBI" id="CHEBI:29917"/>
        <dbReference type="ChEBI" id="CHEBI:29961"/>
        <dbReference type="ChEBI" id="CHEBI:57844"/>
        <dbReference type="ChEBI" id="CHEBI:57856"/>
        <dbReference type="ChEBI" id="CHEBI:59789"/>
        <dbReference type="ChEBI" id="CHEBI:64428"/>
        <dbReference type="ChEBI" id="CHEBI:73599"/>
        <dbReference type="EC" id="2.8.4.4"/>
    </reaction>
</comment>
<comment type="cofactor">
    <cofactor evidence="1">
        <name>[4Fe-4S] cluster</name>
        <dbReference type="ChEBI" id="CHEBI:49883"/>
    </cofactor>
    <text evidence="1">Binds 2 [4Fe-4S] clusters. One cluster is coordinated with 3 cysteines and an exchangeable S-adenosyl-L-methionine.</text>
</comment>
<comment type="subcellular location">
    <subcellularLocation>
        <location evidence="1">Cytoplasm</location>
    </subcellularLocation>
</comment>
<comment type="similarity">
    <text evidence="1">Belongs to the methylthiotransferase family. RimO subfamily.</text>
</comment>
<name>RIMO_RHOPS</name>
<accession>Q136X7</accession>
<organism>
    <name type="scientific">Rhodopseudomonas palustris (strain BisB5)</name>
    <dbReference type="NCBI Taxonomy" id="316057"/>
    <lineage>
        <taxon>Bacteria</taxon>
        <taxon>Pseudomonadati</taxon>
        <taxon>Pseudomonadota</taxon>
        <taxon>Alphaproteobacteria</taxon>
        <taxon>Hyphomicrobiales</taxon>
        <taxon>Nitrobacteraceae</taxon>
        <taxon>Rhodopseudomonas</taxon>
    </lineage>
</organism>
<keyword id="KW-0004">4Fe-4S</keyword>
<keyword id="KW-0963">Cytoplasm</keyword>
<keyword id="KW-0408">Iron</keyword>
<keyword id="KW-0411">Iron-sulfur</keyword>
<keyword id="KW-0479">Metal-binding</keyword>
<keyword id="KW-0949">S-adenosyl-L-methionine</keyword>
<keyword id="KW-0808">Transferase</keyword>
<reference key="1">
    <citation type="submission" date="2006-03" db="EMBL/GenBank/DDBJ databases">
        <title>Complete sequence of Rhodopseudomonas palustris BisB5.</title>
        <authorList>
            <consortium name="US DOE Joint Genome Institute"/>
            <person name="Copeland A."/>
            <person name="Lucas S."/>
            <person name="Lapidus A."/>
            <person name="Barry K."/>
            <person name="Detter J.C."/>
            <person name="Glavina del Rio T."/>
            <person name="Hammon N."/>
            <person name="Israni S."/>
            <person name="Dalin E."/>
            <person name="Tice H."/>
            <person name="Pitluck S."/>
            <person name="Chain P."/>
            <person name="Malfatti S."/>
            <person name="Shin M."/>
            <person name="Vergez L."/>
            <person name="Schmutz J."/>
            <person name="Larimer F."/>
            <person name="Land M."/>
            <person name="Hauser L."/>
            <person name="Pelletier D.A."/>
            <person name="Kyrpides N."/>
            <person name="Lykidis A."/>
            <person name="Oda Y."/>
            <person name="Harwood C.S."/>
            <person name="Richardson P."/>
        </authorList>
    </citation>
    <scope>NUCLEOTIDE SEQUENCE [LARGE SCALE GENOMIC DNA]</scope>
    <source>
        <strain>BisB5</strain>
    </source>
</reference>